<organism>
    <name type="scientific">Chromohalobacter salexigens (strain ATCC BAA-138 / DSM 3043 / CIP 106854 / NCIMB 13768 / 1H11)</name>
    <dbReference type="NCBI Taxonomy" id="290398"/>
    <lineage>
        <taxon>Bacteria</taxon>
        <taxon>Pseudomonadati</taxon>
        <taxon>Pseudomonadota</taxon>
        <taxon>Gammaproteobacteria</taxon>
        <taxon>Oceanospirillales</taxon>
        <taxon>Halomonadaceae</taxon>
        <taxon>Chromohalobacter</taxon>
    </lineage>
</organism>
<protein>
    <recommendedName>
        <fullName evidence="1">ATP-dependent dethiobiotin synthetase BioD</fullName>
        <ecNumber evidence="1">6.3.3.3</ecNumber>
    </recommendedName>
    <alternativeName>
        <fullName evidence="1">DTB synthetase</fullName>
        <shortName evidence="1">DTBS</shortName>
    </alternativeName>
    <alternativeName>
        <fullName evidence="1">Dethiobiotin synthase</fullName>
    </alternativeName>
</protein>
<name>BIOD_CHRSD</name>
<sequence>MTTYFVTGTDTDAGKTLVASGLLALARRRGLTTLGLKPVASGCESTTEGLRNIDALTLQAQSMPTPPYATLNPYAYAPAIAPHLAARRAGRIPTLDALVAHVADPLAEKRDLTLIEGAGGWRVPLNDDEDLAGLAVRLELPVILVVGLELGCLNHARLSAEAIRADGLPLAGWVGNLIDPGLSFDEVADEACYRDNLATLERTLEAPCLGIVPRLAAATPDARAHAAADYLTLPGDA</sequence>
<reference key="1">
    <citation type="journal article" date="2011" name="Stand. Genomic Sci.">
        <title>Complete genome sequence of the halophilic and highly halotolerant Chromohalobacter salexigens type strain (1H11(T)).</title>
        <authorList>
            <person name="Copeland A."/>
            <person name="O'Connor K."/>
            <person name="Lucas S."/>
            <person name="Lapidus A."/>
            <person name="Berry K.W."/>
            <person name="Detter J.C."/>
            <person name="Del Rio T.G."/>
            <person name="Hammon N."/>
            <person name="Dalin E."/>
            <person name="Tice H."/>
            <person name="Pitluck S."/>
            <person name="Bruce D."/>
            <person name="Goodwin L."/>
            <person name="Han C."/>
            <person name="Tapia R."/>
            <person name="Saunders E."/>
            <person name="Schmutz J."/>
            <person name="Brettin T."/>
            <person name="Larimer F."/>
            <person name="Land M."/>
            <person name="Hauser L."/>
            <person name="Vargas C."/>
            <person name="Nieto J.J."/>
            <person name="Kyrpides N.C."/>
            <person name="Ivanova N."/>
            <person name="Goker M."/>
            <person name="Klenk H.P."/>
            <person name="Csonka L.N."/>
            <person name="Woyke T."/>
        </authorList>
    </citation>
    <scope>NUCLEOTIDE SEQUENCE [LARGE SCALE GENOMIC DNA]</scope>
    <source>
        <strain>ATCC BAA-138 / DSM 3043 / CIP 106854 / NCIMB 13768 / 1H11</strain>
    </source>
</reference>
<proteinExistence type="inferred from homology"/>
<feature type="chain" id="PRO_0000302497" description="ATP-dependent dethiobiotin synthetase BioD">
    <location>
        <begin position="1"/>
        <end position="237"/>
    </location>
</feature>
<feature type="active site" evidence="1">
    <location>
        <position position="37"/>
    </location>
</feature>
<feature type="binding site" evidence="1">
    <location>
        <begin position="12"/>
        <end position="17"/>
    </location>
    <ligand>
        <name>ATP</name>
        <dbReference type="ChEBI" id="CHEBI:30616"/>
    </ligand>
</feature>
<feature type="binding site" evidence="1">
    <location>
        <position position="16"/>
    </location>
    <ligand>
        <name>Mg(2+)</name>
        <dbReference type="ChEBI" id="CHEBI:18420"/>
    </ligand>
</feature>
<feature type="binding site" evidence="1">
    <location>
        <position position="41"/>
    </location>
    <ligand>
        <name>substrate</name>
    </ligand>
</feature>
<feature type="binding site" evidence="1">
    <location>
        <position position="54"/>
    </location>
    <ligand>
        <name>ATP</name>
        <dbReference type="ChEBI" id="CHEBI:30616"/>
    </ligand>
</feature>
<feature type="binding site" evidence="1">
    <location>
        <position position="54"/>
    </location>
    <ligand>
        <name>Mg(2+)</name>
        <dbReference type="ChEBI" id="CHEBI:18420"/>
    </ligand>
</feature>
<feature type="binding site" evidence="1">
    <location>
        <begin position="116"/>
        <end position="119"/>
    </location>
    <ligand>
        <name>ATP</name>
        <dbReference type="ChEBI" id="CHEBI:30616"/>
    </ligand>
</feature>
<feature type="binding site" evidence="1">
    <location>
        <position position="116"/>
    </location>
    <ligand>
        <name>Mg(2+)</name>
        <dbReference type="ChEBI" id="CHEBI:18420"/>
    </ligand>
</feature>
<feature type="binding site" evidence="1">
    <location>
        <begin position="213"/>
        <end position="215"/>
    </location>
    <ligand>
        <name>ATP</name>
        <dbReference type="ChEBI" id="CHEBI:30616"/>
    </ligand>
</feature>
<dbReference type="EC" id="6.3.3.3" evidence="1"/>
<dbReference type="EMBL" id="CP000285">
    <property type="protein sequence ID" value="ABE58519.1"/>
    <property type="molecule type" value="Genomic_DNA"/>
</dbReference>
<dbReference type="RefSeq" id="WP_011506465.1">
    <property type="nucleotide sequence ID" value="NC_007963.1"/>
</dbReference>
<dbReference type="SMR" id="Q1QYD9"/>
<dbReference type="STRING" id="290398.Csal_1163"/>
<dbReference type="GeneID" id="95333910"/>
<dbReference type="KEGG" id="csa:Csal_1163"/>
<dbReference type="eggNOG" id="COG0132">
    <property type="taxonomic scope" value="Bacteria"/>
</dbReference>
<dbReference type="HOGENOM" id="CLU_072551_0_0_6"/>
<dbReference type="OrthoDB" id="9802097at2"/>
<dbReference type="UniPathway" id="UPA00078">
    <property type="reaction ID" value="UER00161"/>
</dbReference>
<dbReference type="Proteomes" id="UP000000239">
    <property type="component" value="Chromosome"/>
</dbReference>
<dbReference type="GO" id="GO:0005829">
    <property type="term" value="C:cytosol"/>
    <property type="evidence" value="ECO:0007669"/>
    <property type="project" value="TreeGrafter"/>
</dbReference>
<dbReference type="GO" id="GO:0005524">
    <property type="term" value="F:ATP binding"/>
    <property type="evidence" value="ECO:0007669"/>
    <property type="project" value="UniProtKB-UniRule"/>
</dbReference>
<dbReference type="GO" id="GO:0004141">
    <property type="term" value="F:dethiobiotin synthase activity"/>
    <property type="evidence" value="ECO:0007669"/>
    <property type="project" value="UniProtKB-UniRule"/>
</dbReference>
<dbReference type="GO" id="GO:0000287">
    <property type="term" value="F:magnesium ion binding"/>
    <property type="evidence" value="ECO:0007669"/>
    <property type="project" value="UniProtKB-UniRule"/>
</dbReference>
<dbReference type="GO" id="GO:0009102">
    <property type="term" value="P:biotin biosynthetic process"/>
    <property type="evidence" value="ECO:0007669"/>
    <property type="project" value="UniProtKB-UniRule"/>
</dbReference>
<dbReference type="CDD" id="cd03109">
    <property type="entry name" value="DTBS"/>
    <property type="match status" value="1"/>
</dbReference>
<dbReference type="FunFam" id="3.40.50.300:FF:000292">
    <property type="entry name" value="ATP-dependent dethiobiotin synthetase BioD"/>
    <property type="match status" value="1"/>
</dbReference>
<dbReference type="Gene3D" id="3.40.50.300">
    <property type="entry name" value="P-loop containing nucleotide triphosphate hydrolases"/>
    <property type="match status" value="1"/>
</dbReference>
<dbReference type="HAMAP" id="MF_00336">
    <property type="entry name" value="BioD"/>
    <property type="match status" value="1"/>
</dbReference>
<dbReference type="InterPro" id="IPR004472">
    <property type="entry name" value="DTB_synth_BioD"/>
</dbReference>
<dbReference type="InterPro" id="IPR027417">
    <property type="entry name" value="P-loop_NTPase"/>
</dbReference>
<dbReference type="NCBIfam" id="TIGR00347">
    <property type="entry name" value="bioD"/>
    <property type="match status" value="1"/>
</dbReference>
<dbReference type="PANTHER" id="PTHR43210">
    <property type="entry name" value="DETHIOBIOTIN SYNTHETASE"/>
    <property type="match status" value="1"/>
</dbReference>
<dbReference type="PANTHER" id="PTHR43210:SF5">
    <property type="entry name" value="DETHIOBIOTIN SYNTHETASE"/>
    <property type="match status" value="1"/>
</dbReference>
<dbReference type="Pfam" id="PF13500">
    <property type="entry name" value="AAA_26"/>
    <property type="match status" value="1"/>
</dbReference>
<dbReference type="PIRSF" id="PIRSF006755">
    <property type="entry name" value="DTB_synth"/>
    <property type="match status" value="1"/>
</dbReference>
<dbReference type="SUPFAM" id="SSF52540">
    <property type="entry name" value="P-loop containing nucleoside triphosphate hydrolases"/>
    <property type="match status" value="1"/>
</dbReference>
<accession>Q1QYD9</accession>
<evidence type="ECO:0000255" key="1">
    <source>
        <dbReference type="HAMAP-Rule" id="MF_00336"/>
    </source>
</evidence>
<keyword id="KW-0067">ATP-binding</keyword>
<keyword id="KW-0093">Biotin biosynthesis</keyword>
<keyword id="KW-0963">Cytoplasm</keyword>
<keyword id="KW-0436">Ligase</keyword>
<keyword id="KW-0460">Magnesium</keyword>
<keyword id="KW-0479">Metal-binding</keyword>
<keyword id="KW-0547">Nucleotide-binding</keyword>
<keyword id="KW-1185">Reference proteome</keyword>
<comment type="function">
    <text evidence="1">Catalyzes a mechanistically unusual reaction, the ATP-dependent insertion of CO2 between the N7 and N8 nitrogen atoms of 7,8-diaminopelargonic acid (DAPA, also called 7,8-diammoniononanoate) to form a ureido ring.</text>
</comment>
<comment type="catalytic activity">
    <reaction evidence="1">
        <text>(7R,8S)-7,8-diammoniononanoate + CO2 + ATP = (4R,5S)-dethiobiotin + ADP + phosphate + 3 H(+)</text>
        <dbReference type="Rhea" id="RHEA:15805"/>
        <dbReference type="ChEBI" id="CHEBI:15378"/>
        <dbReference type="ChEBI" id="CHEBI:16526"/>
        <dbReference type="ChEBI" id="CHEBI:30616"/>
        <dbReference type="ChEBI" id="CHEBI:43474"/>
        <dbReference type="ChEBI" id="CHEBI:149469"/>
        <dbReference type="ChEBI" id="CHEBI:149473"/>
        <dbReference type="ChEBI" id="CHEBI:456216"/>
        <dbReference type="EC" id="6.3.3.3"/>
    </reaction>
</comment>
<comment type="cofactor">
    <cofactor evidence="1">
        <name>Mg(2+)</name>
        <dbReference type="ChEBI" id="CHEBI:18420"/>
    </cofactor>
</comment>
<comment type="pathway">
    <text evidence="1">Cofactor biosynthesis; biotin biosynthesis; biotin from 7,8-diaminononanoate: step 1/2.</text>
</comment>
<comment type="subunit">
    <text evidence="1">Homodimer.</text>
</comment>
<comment type="subcellular location">
    <subcellularLocation>
        <location evidence="1">Cytoplasm</location>
    </subcellularLocation>
</comment>
<comment type="similarity">
    <text evidence="1">Belongs to the dethiobiotin synthetase family.</text>
</comment>
<gene>
    <name evidence="1" type="primary">bioD</name>
    <name type="ordered locus">Csal_1163</name>
</gene>